<proteinExistence type="inferred from homology"/>
<gene>
    <name evidence="1" type="primary">rpmI</name>
    <name type="ordered locus">Bcen_0995</name>
</gene>
<feature type="chain" id="PRO_0000258646" description="Large ribosomal subunit protein bL35">
    <location>
        <begin position="1"/>
        <end position="65"/>
    </location>
</feature>
<reference key="1">
    <citation type="submission" date="2006-05" db="EMBL/GenBank/DDBJ databases">
        <title>Complete sequence of chromosome 1 of Burkholderia cenocepacia AU 1054.</title>
        <authorList>
            <consortium name="US DOE Joint Genome Institute"/>
            <person name="Copeland A."/>
            <person name="Lucas S."/>
            <person name="Lapidus A."/>
            <person name="Barry K."/>
            <person name="Detter J.C."/>
            <person name="Glavina del Rio T."/>
            <person name="Hammon N."/>
            <person name="Israni S."/>
            <person name="Dalin E."/>
            <person name="Tice H."/>
            <person name="Pitluck S."/>
            <person name="Chain P."/>
            <person name="Malfatti S."/>
            <person name="Shin M."/>
            <person name="Vergez L."/>
            <person name="Schmutz J."/>
            <person name="Larimer F."/>
            <person name="Land M."/>
            <person name="Hauser L."/>
            <person name="Kyrpides N."/>
            <person name="Lykidis A."/>
            <person name="LiPuma J.J."/>
            <person name="Konstantinidis K."/>
            <person name="Tiedje J.M."/>
            <person name="Richardson P."/>
        </authorList>
    </citation>
    <scope>NUCLEOTIDE SEQUENCE [LARGE SCALE GENOMIC DNA]</scope>
    <source>
        <strain>AU 1054</strain>
    </source>
</reference>
<name>RL35_BURO1</name>
<protein>
    <recommendedName>
        <fullName evidence="1">Large ribosomal subunit protein bL35</fullName>
    </recommendedName>
    <alternativeName>
        <fullName evidence="2">50S ribosomal protein L35</fullName>
    </alternativeName>
</protein>
<evidence type="ECO:0000255" key="1">
    <source>
        <dbReference type="HAMAP-Rule" id="MF_00514"/>
    </source>
</evidence>
<evidence type="ECO:0000305" key="2"/>
<organism>
    <name type="scientific">Burkholderia orbicola (strain AU 1054)</name>
    <dbReference type="NCBI Taxonomy" id="331271"/>
    <lineage>
        <taxon>Bacteria</taxon>
        <taxon>Pseudomonadati</taxon>
        <taxon>Pseudomonadota</taxon>
        <taxon>Betaproteobacteria</taxon>
        <taxon>Burkholderiales</taxon>
        <taxon>Burkholderiaceae</taxon>
        <taxon>Burkholderia</taxon>
        <taxon>Burkholderia cepacia complex</taxon>
        <taxon>Burkholderia orbicola</taxon>
    </lineage>
</organism>
<dbReference type="EMBL" id="CP000378">
    <property type="protein sequence ID" value="ABF75904.1"/>
    <property type="molecule type" value="Genomic_DNA"/>
</dbReference>
<dbReference type="SMR" id="Q1BWV1"/>
<dbReference type="HOGENOM" id="CLU_169643_1_0_4"/>
<dbReference type="GO" id="GO:0022625">
    <property type="term" value="C:cytosolic large ribosomal subunit"/>
    <property type="evidence" value="ECO:0007669"/>
    <property type="project" value="TreeGrafter"/>
</dbReference>
<dbReference type="GO" id="GO:0003735">
    <property type="term" value="F:structural constituent of ribosome"/>
    <property type="evidence" value="ECO:0007669"/>
    <property type="project" value="InterPro"/>
</dbReference>
<dbReference type="GO" id="GO:0006412">
    <property type="term" value="P:translation"/>
    <property type="evidence" value="ECO:0007669"/>
    <property type="project" value="UniProtKB-UniRule"/>
</dbReference>
<dbReference type="FunFam" id="4.10.410.60:FF:000001">
    <property type="entry name" value="50S ribosomal protein L35"/>
    <property type="match status" value="1"/>
</dbReference>
<dbReference type="Gene3D" id="4.10.410.60">
    <property type="match status" value="1"/>
</dbReference>
<dbReference type="HAMAP" id="MF_00514">
    <property type="entry name" value="Ribosomal_bL35"/>
    <property type="match status" value="1"/>
</dbReference>
<dbReference type="InterPro" id="IPR001706">
    <property type="entry name" value="Ribosomal_bL35"/>
</dbReference>
<dbReference type="InterPro" id="IPR021137">
    <property type="entry name" value="Ribosomal_bL35-like"/>
</dbReference>
<dbReference type="InterPro" id="IPR018265">
    <property type="entry name" value="Ribosomal_bL35_CS"/>
</dbReference>
<dbReference type="InterPro" id="IPR037229">
    <property type="entry name" value="Ribosomal_bL35_sf"/>
</dbReference>
<dbReference type="NCBIfam" id="TIGR00001">
    <property type="entry name" value="rpmI_bact"/>
    <property type="match status" value="1"/>
</dbReference>
<dbReference type="PANTHER" id="PTHR33343">
    <property type="entry name" value="54S RIBOSOMAL PROTEIN BL35M"/>
    <property type="match status" value="1"/>
</dbReference>
<dbReference type="PANTHER" id="PTHR33343:SF1">
    <property type="entry name" value="LARGE RIBOSOMAL SUBUNIT PROTEIN BL35M"/>
    <property type="match status" value="1"/>
</dbReference>
<dbReference type="Pfam" id="PF01632">
    <property type="entry name" value="Ribosomal_L35p"/>
    <property type="match status" value="1"/>
</dbReference>
<dbReference type="PRINTS" id="PR00064">
    <property type="entry name" value="RIBOSOMALL35"/>
</dbReference>
<dbReference type="SUPFAM" id="SSF143034">
    <property type="entry name" value="L35p-like"/>
    <property type="match status" value="1"/>
</dbReference>
<dbReference type="PROSITE" id="PS00936">
    <property type="entry name" value="RIBOSOMAL_L35"/>
    <property type="match status" value="1"/>
</dbReference>
<accession>Q1BWV1</accession>
<sequence>MPKMKTKKSAAKRFVVRPGGTVKRGQAFKRHILTKKTTKNKRHLRGATAVHDSDLNSVRAMLPFA</sequence>
<comment type="similarity">
    <text evidence="1">Belongs to the bacterial ribosomal protein bL35 family.</text>
</comment>
<keyword id="KW-0687">Ribonucleoprotein</keyword>
<keyword id="KW-0689">Ribosomal protein</keyword>